<name>GATC_GEOMG</name>
<accession>Q39ZJ9</accession>
<proteinExistence type="inferred from homology"/>
<reference key="1">
    <citation type="journal article" date="2009" name="BMC Microbiol.">
        <title>The genome sequence of Geobacter metallireducens: features of metabolism, physiology and regulation common and dissimilar to Geobacter sulfurreducens.</title>
        <authorList>
            <person name="Aklujkar M."/>
            <person name="Krushkal J."/>
            <person name="DiBartolo G."/>
            <person name="Lapidus A."/>
            <person name="Land M.L."/>
            <person name="Lovley D.R."/>
        </authorList>
    </citation>
    <scope>NUCLEOTIDE SEQUENCE [LARGE SCALE GENOMIC DNA]</scope>
    <source>
        <strain>ATCC 53774 / DSM 7210 / GS-15</strain>
    </source>
</reference>
<feature type="chain" id="PRO_1000016123" description="Aspartyl/glutamyl-tRNA(Asn/Gln) amidotransferase subunit C">
    <location>
        <begin position="1"/>
        <end position="95"/>
    </location>
</feature>
<protein>
    <recommendedName>
        <fullName evidence="1">Aspartyl/glutamyl-tRNA(Asn/Gln) amidotransferase subunit C</fullName>
        <shortName evidence="1">Asp/Glu-ADT subunit C</shortName>
        <ecNumber evidence="1">6.3.5.-</ecNumber>
    </recommendedName>
</protein>
<gene>
    <name evidence="1" type="primary">gatC</name>
    <name type="ordered locus">Gmet_0076</name>
</gene>
<evidence type="ECO:0000255" key="1">
    <source>
        <dbReference type="HAMAP-Rule" id="MF_00122"/>
    </source>
</evidence>
<dbReference type="EC" id="6.3.5.-" evidence="1"/>
<dbReference type="EMBL" id="CP000148">
    <property type="protein sequence ID" value="ABB30325.1"/>
    <property type="molecule type" value="Genomic_DNA"/>
</dbReference>
<dbReference type="RefSeq" id="WP_004514200.1">
    <property type="nucleotide sequence ID" value="NC_007517.1"/>
</dbReference>
<dbReference type="SMR" id="Q39ZJ9"/>
<dbReference type="STRING" id="269799.Gmet_0076"/>
<dbReference type="KEGG" id="gme:Gmet_0076"/>
<dbReference type="eggNOG" id="COG0721">
    <property type="taxonomic scope" value="Bacteria"/>
</dbReference>
<dbReference type="HOGENOM" id="CLU_105899_6_1_7"/>
<dbReference type="Proteomes" id="UP000007073">
    <property type="component" value="Chromosome"/>
</dbReference>
<dbReference type="GO" id="GO:0050566">
    <property type="term" value="F:asparaginyl-tRNA synthase (glutamine-hydrolyzing) activity"/>
    <property type="evidence" value="ECO:0007669"/>
    <property type="project" value="RHEA"/>
</dbReference>
<dbReference type="GO" id="GO:0005524">
    <property type="term" value="F:ATP binding"/>
    <property type="evidence" value="ECO:0007669"/>
    <property type="project" value="UniProtKB-KW"/>
</dbReference>
<dbReference type="GO" id="GO:0050567">
    <property type="term" value="F:glutaminyl-tRNA synthase (glutamine-hydrolyzing) activity"/>
    <property type="evidence" value="ECO:0007669"/>
    <property type="project" value="UniProtKB-UniRule"/>
</dbReference>
<dbReference type="GO" id="GO:0070681">
    <property type="term" value="P:glutaminyl-tRNAGln biosynthesis via transamidation"/>
    <property type="evidence" value="ECO:0007669"/>
    <property type="project" value="TreeGrafter"/>
</dbReference>
<dbReference type="GO" id="GO:0006450">
    <property type="term" value="P:regulation of translational fidelity"/>
    <property type="evidence" value="ECO:0007669"/>
    <property type="project" value="InterPro"/>
</dbReference>
<dbReference type="GO" id="GO:0006412">
    <property type="term" value="P:translation"/>
    <property type="evidence" value="ECO:0007669"/>
    <property type="project" value="UniProtKB-UniRule"/>
</dbReference>
<dbReference type="Gene3D" id="1.10.20.60">
    <property type="entry name" value="Glu-tRNAGln amidotransferase C subunit, N-terminal domain"/>
    <property type="match status" value="1"/>
</dbReference>
<dbReference type="HAMAP" id="MF_00122">
    <property type="entry name" value="GatC"/>
    <property type="match status" value="1"/>
</dbReference>
<dbReference type="InterPro" id="IPR036113">
    <property type="entry name" value="Asp/Glu-ADT_sf_sub_c"/>
</dbReference>
<dbReference type="InterPro" id="IPR003837">
    <property type="entry name" value="GatC"/>
</dbReference>
<dbReference type="NCBIfam" id="TIGR00135">
    <property type="entry name" value="gatC"/>
    <property type="match status" value="1"/>
</dbReference>
<dbReference type="PANTHER" id="PTHR15004">
    <property type="entry name" value="GLUTAMYL-TRNA(GLN) AMIDOTRANSFERASE SUBUNIT C, MITOCHONDRIAL"/>
    <property type="match status" value="1"/>
</dbReference>
<dbReference type="PANTHER" id="PTHR15004:SF0">
    <property type="entry name" value="GLUTAMYL-TRNA(GLN) AMIDOTRANSFERASE SUBUNIT C, MITOCHONDRIAL"/>
    <property type="match status" value="1"/>
</dbReference>
<dbReference type="Pfam" id="PF02686">
    <property type="entry name" value="GatC"/>
    <property type="match status" value="1"/>
</dbReference>
<dbReference type="SUPFAM" id="SSF141000">
    <property type="entry name" value="Glu-tRNAGln amidotransferase C subunit"/>
    <property type="match status" value="1"/>
</dbReference>
<sequence length="95" mass="10367">MKITKAEVDAVALLARLELTPEETETFTGQMDAILAYVEKLNELDTSGIIPTSHAVPVENAFRDDAVRPSIGVENALANAPDRVEGFFRVPKVIE</sequence>
<keyword id="KW-0067">ATP-binding</keyword>
<keyword id="KW-0436">Ligase</keyword>
<keyword id="KW-0547">Nucleotide-binding</keyword>
<keyword id="KW-0648">Protein biosynthesis</keyword>
<keyword id="KW-1185">Reference proteome</keyword>
<organism>
    <name type="scientific">Geobacter metallireducens (strain ATCC 53774 / DSM 7210 / GS-15)</name>
    <dbReference type="NCBI Taxonomy" id="269799"/>
    <lineage>
        <taxon>Bacteria</taxon>
        <taxon>Pseudomonadati</taxon>
        <taxon>Thermodesulfobacteriota</taxon>
        <taxon>Desulfuromonadia</taxon>
        <taxon>Geobacterales</taxon>
        <taxon>Geobacteraceae</taxon>
        <taxon>Geobacter</taxon>
    </lineage>
</organism>
<comment type="function">
    <text evidence="1">Allows the formation of correctly charged Asn-tRNA(Asn) or Gln-tRNA(Gln) through the transamidation of misacylated Asp-tRNA(Asn) or Glu-tRNA(Gln) in organisms which lack either or both of asparaginyl-tRNA or glutaminyl-tRNA synthetases. The reaction takes place in the presence of glutamine and ATP through an activated phospho-Asp-tRNA(Asn) or phospho-Glu-tRNA(Gln).</text>
</comment>
<comment type="catalytic activity">
    <reaction evidence="1">
        <text>L-glutamyl-tRNA(Gln) + L-glutamine + ATP + H2O = L-glutaminyl-tRNA(Gln) + L-glutamate + ADP + phosphate + H(+)</text>
        <dbReference type="Rhea" id="RHEA:17521"/>
        <dbReference type="Rhea" id="RHEA-COMP:9681"/>
        <dbReference type="Rhea" id="RHEA-COMP:9684"/>
        <dbReference type="ChEBI" id="CHEBI:15377"/>
        <dbReference type="ChEBI" id="CHEBI:15378"/>
        <dbReference type="ChEBI" id="CHEBI:29985"/>
        <dbReference type="ChEBI" id="CHEBI:30616"/>
        <dbReference type="ChEBI" id="CHEBI:43474"/>
        <dbReference type="ChEBI" id="CHEBI:58359"/>
        <dbReference type="ChEBI" id="CHEBI:78520"/>
        <dbReference type="ChEBI" id="CHEBI:78521"/>
        <dbReference type="ChEBI" id="CHEBI:456216"/>
    </reaction>
</comment>
<comment type="catalytic activity">
    <reaction evidence="1">
        <text>L-aspartyl-tRNA(Asn) + L-glutamine + ATP + H2O = L-asparaginyl-tRNA(Asn) + L-glutamate + ADP + phosphate + 2 H(+)</text>
        <dbReference type="Rhea" id="RHEA:14513"/>
        <dbReference type="Rhea" id="RHEA-COMP:9674"/>
        <dbReference type="Rhea" id="RHEA-COMP:9677"/>
        <dbReference type="ChEBI" id="CHEBI:15377"/>
        <dbReference type="ChEBI" id="CHEBI:15378"/>
        <dbReference type="ChEBI" id="CHEBI:29985"/>
        <dbReference type="ChEBI" id="CHEBI:30616"/>
        <dbReference type="ChEBI" id="CHEBI:43474"/>
        <dbReference type="ChEBI" id="CHEBI:58359"/>
        <dbReference type="ChEBI" id="CHEBI:78515"/>
        <dbReference type="ChEBI" id="CHEBI:78516"/>
        <dbReference type="ChEBI" id="CHEBI:456216"/>
    </reaction>
</comment>
<comment type="subunit">
    <text evidence="1">Heterotrimer of A, B and C subunits.</text>
</comment>
<comment type="similarity">
    <text evidence="1">Belongs to the GatC family.</text>
</comment>